<comment type="function">
    <text evidence="1">Catalyzes the condensation of the acetyl group of acetyl-CoA with 3-methyl-2-oxobutanoate (2-ketoisovalerate) to form 3-carboxy-3-hydroxy-4-methylpentanoate (2-isopropylmalate).</text>
</comment>
<comment type="catalytic activity">
    <reaction evidence="1">
        <text>3-methyl-2-oxobutanoate + acetyl-CoA + H2O = (2S)-2-isopropylmalate + CoA + H(+)</text>
        <dbReference type="Rhea" id="RHEA:21524"/>
        <dbReference type="ChEBI" id="CHEBI:1178"/>
        <dbReference type="ChEBI" id="CHEBI:11851"/>
        <dbReference type="ChEBI" id="CHEBI:15377"/>
        <dbReference type="ChEBI" id="CHEBI:15378"/>
        <dbReference type="ChEBI" id="CHEBI:57287"/>
        <dbReference type="ChEBI" id="CHEBI:57288"/>
        <dbReference type="EC" id="2.3.3.13"/>
    </reaction>
</comment>
<comment type="cofactor">
    <cofactor evidence="1">
        <name>Mn(2+)</name>
        <dbReference type="ChEBI" id="CHEBI:29035"/>
    </cofactor>
</comment>
<comment type="pathway">
    <text evidence="1">Amino-acid biosynthesis; L-leucine biosynthesis; L-leucine from 3-methyl-2-oxobutanoate: step 1/4.</text>
</comment>
<comment type="subunit">
    <text evidence="1">Homodimer.</text>
</comment>
<comment type="subcellular location">
    <subcellularLocation>
        <location evidence="1">Cytoplasm</location>
    </subcellularLocation>
</comment>
<comment type="similarity">
    <text evidence="1">Belongs to the alpha-IPM synthase/homocitrate synthase family. LeuA type 1 subfamily.</text>
</comment>
<sequence length="518" mass="56944">MERNIIVLDTTLRDGEQVPGAKLNVQQKIEFAQQLKRLNVDIIEAGFPASSAGDFQAVQEIARTVGDSVSITALARAVKGDIDAVYESIKLAQNPLIHIVLGTSNIHVEKKFNRSKDAVLQMGVDAVKYAKTLLPQVQYSTEDASRSDFEYLWKTIEAVVKAGATMINVPDTVGYAVPDEFGELIRKINERLKNLNDQVILSVHCHNDLGLATANTLSAVRNGAEKVECTINGLGERAGNTSLEEVVMGLKVRENHFKASTNVRLKELIRTSRLLTHLTGLDVQVNKAITGENAFAHSSGIHQDGLLKDKQVYEIMSPEEVGADSMELILTARSGRHAFKNAVEKLGFETGEGDDFEALFEKFLLLADAKKEVYDHDVFYLVTQHRTHEEVSSHLYELDSFQVVTNDMYPTATVKLKKGSETFRDSMVGDGPIDALYSAIKALVGLDVQLKDYKINSLSRGKEAIGRVNIRIEYQGKIYSGRAMDTDIIKASALAFLNGINAVLLDAGHDSQAPVSAR</sequence>
<dbReference type="EC" id="2.3.3.13" evidence="1"/>
<dbReference type="EMBL" id="CP001793">
    <property type="protein sequence ID" value="ACX66967.1"/>
    <property type="molecule type" value="Genomic_DNA"/>
</dbReference>
<dbReference type="RefSeq" id="WP_015736822.1">
    <property type="nucleotide sequence ID" value="NC_013406.1"/>
</dbReference>
<dbReference type="SMR" id="D3EBC1"/>
<dbReference type="STRING" id="481743.GYMC10_4749"/>
<dbReference type="KEGG" id="gym:GYMC10_4749"/>
<dbReference type="HOGENOM" id="CLU_022158_0_1_9"/>
<dbReference type="UniPathway" id="UPA00048">
    <property type="reaction ID" value="UER00070"/>
</dbReference>
<dbReference type="Proteomes" id="UP000002381">
    <property type="component" value="Chromosome"/>
</dbReference>
<dbReference type="GO" id="GO:0005737">
    <property type="term" value="C:cytoplasm"/>
    <property type="evidence" value="ECO:0007669"/>
    <property type="project" value="UniProtKB-SubCell"/>
</dbReference>
<dbReference type="GO" id="GO:0003852">
    <property type="term" value="F:2-isopropylmalate synthase activity"/>
    <property type="evidence" value="ECO:0007669"/>
    <property type="project" value="UniProtKB-UniRule"/>
</dbReference>
<dbReference type="GO" id="GO:0003985">
    <property type="term" value="F:acetyl-CoA C-acetyltransferase activity"/>
    <property type="evidence" value="ECO:0007669"/>
    <property type="project" value="UniProtKB-UniRule"/>
</dbReference>
<dbReference type="GO" id="GO:0030145">
    <property type="term" value="F:manganese ion binding"/>
    <property type="evidence" value="ECO:0007669"/>
    <property type="project" value="UniProtKB-UniRule"/>
</dbReference>
<dbReference type="GO" id="GO:0009098">
    <property type="term" value="P:L-leucine biosynthetic process"/>
    <property type="evidence" value="ECO:0007669"/>
    <property type="project" value="UniProtKB-UniRule"/>
</dbReference>
<dbReference type="CDD" id="cd07940">
    <property type="entry name" value="DRE_TIM_IPMS"/>
    <property type="match status" value="1"/>
</dbReference>
<dbReference type="FunFam" id="1.10.238.260:FF:000001">
    <property type="entry name" value="2-isopropylmalate synthase"/>
    <property type="match status" value="1"/>
</dbReference>
<dbReference type="FunFam" id="3.20.20.70:FF:000010">
    <property type="entry name" value="2-isopropylmalate synthase"/>
    <property type="match status" value="1"/>
</dbReference>
<dbReference type="Gene3D" id="1.10.238.260">
    <property type="match status" value="1"/>
</dbReference>
<dbReference type="Gene3D" id="3.30.160.270">
    <property type="match status" value="1"/>
</dbReference>
<dbReference type="Gene3D" id="3.20.20.70">
    <property type="entry name" value="Aldolase class I"/>
    <property type="match status" value="1"/>
</dbReference>
<dbReference type="HAMAP" id="MF_01025">
    <property type="entry name" value="LeuA_type1"/>
    <property type="match status" value="1"/>
</dbReference>
<dbReference type="InterPro" id="IPR050073">
    <property type="entry name" value="2-IPM_HCS-like"/>
</dbReference>
<dbReference type="InterPro" id="IPR013709">
    <property type="entry name" value="2-isopropylmalate_synth_dimer"/>
</dbReference>
<dbReference type="InterPro" id="IPR002034">
    <property type="entry name" value="AIPM/Hcit_synth_CS"/>
</dbReference>
<dbReference type="InterPro" id="IPR013785">
    <property type="entry name" value="Aldolase_TIM"/>
</dbReference>
<dbReference type="InterPro" id="IPR054691">
    <property type="entry name" value="LeuA/HCS_post-cat"/>
</dbReference>
<dbReference type="InterPro" id="IPR036230">
    <property type="entry name" value="LeuA_allosteric_dom_sf"/>
</dbReference>
<dbReference type="InterPro" id="IPR005671">
    <property type="entry name" value="LeuA_bact_synth"/>
</dbReference>
<dbReference type="InterPro" id="IPR000891">
    <property type="entry name" value="PYR_CT"/>
</dbReference>
<dbReference type="NCBIfam" id="TIGR00973">
    <property type="entry name" value="leuA_bact"/>
    <property type="match status" value="1"/>
</dbReference>
<dbReference type="NCBIfam" id="NF002086">
    <property type="entry name" value="PRK00915.1-3"/>
    <property type="match status" value="1"/>
</dbReference>
<dbReference type="PANTHER" id="PTHR10277:SF9">
    <property type="entry name" value="2-ISOPROPYLMALATE SYNTHASE 1, CHLOROPLASTIC-RELATED"/>
    <property type="match status" value="1"/>
</dbReference>
<dbReference type="PANTHER" id="PTHR10277">
    <property type="entry name" value="HOMOCITRATE SYNTHASE-RELATED"/>
    <property type="match status" value="1"/>
</dbReference>
<dbReference type="Pfam" id="PF22617">
    <property type="entry name" value="HCS_D2"/>
    <property type="match status" value="1"/>
</dbReference>
<dbReference type="Pfam" id="PF00682">
    <property type="entry name" value="HMGL-like"/>
    <property type="match status" value="1"/>
</dbReference>
<dbReference type="Pfam" id="PF08502">
    <property type="entry name" value="LeuA_dimer"/>
    <property type="match status" value="1"/>
</dbReference>
<dbReference type="SMART" id="SM00917">
    <property type="entry name" value="LeuA_dimer"/>
    <property type="match status" value="1"/>
</dbReference>
<dbReference type="SUPFAM" id="SSF110921">
    <property type="entry name" value="2-isopropylmalate synthase LeuA, allosteric (dimerisation) domain"/>
    <property type="match status" value="1"/>
</dbReference>
<dbReference type="SUPFAM" id="SSF51569">
    <property type="entry name" value="Aldolase"/>
    <property type="match status" value="1"/>
</dbReference>
<dbReference type="PROSITE" id="PS00815">
    <property type="entry name" value="AIPM_HOMOCIT_SYNTH_1"/>
    <property type="match status" value="1"/>
</dbReference>
<dbReference type="PROSITE" id="PS00816">
    <property type="entry name" value="AIPM_HOMOCIT_SYNTH_2"/>
    <property type="match status" value="1"/>
</dbReference>
<dbReference type="PROSITE" id="PS50991">
    <property type="entry name" value="PYR_CT"/>
    <property type="match status" value="1"/>
</dbReference>
<protein>
    <recommendedName>
        <fullName evidence="1">2-isopropylmalate synthase</fullName>
        <ecNumber evidence="1">2.3.3.13</ecNumber>
    </recommendedName>
    <alternativeName>
        <fullName evidence="1">Alpha-IPM synthase</fullName>
    </alternativeName>
    <alternativeName>
        <fullName evidence="1">Alpha-isopropylmalate synthase</fullName>
    </alternativeName>
</protein>
<reference key="1">
    <citation type="submission" date="2009-10" db="EMBL/GenBank/DDBJ databases">
        <title>Complete sequence of Geobacillus sp. Y412MC10.</title>
        <authorList>
            <person name="Lucas S."/>
            <person name="Copeland A."/>
            <person name="Lapidus A."/>
            <person name="Glavina del Rio T."/>
            <person name="Dalin E."/>
            <person name="Tice H."/>
            <person name="Bruce D."/>
            <person name="Goodwin L."/>
            <person name="Pitluck S."/>
            <person name="Saunders E."/>
            <person name="Brettin T."/>
            <person name="Detter J.C."/>
            <person name="Han C."/>
            <person name="Larimer F."/>
            <person name="Land M."/>
            <person name="Hauser L."/>
            <person name="Kyrpides N."/>
            <person name="Ovchinnikova G."/>
            <person name="Brumm P."/>
            <person name="Mead D."/>
        </authorList>
    </citation>
    <scope>NUCLEOTIDE SEQUENCE [LARGE SCALE GENOMIC DNA]</scope>
    <source>
        <strain>Y412MC10</strain>
    </source>
</reference>
<name>LEU1_GEOS4</name>
<keyword id="KW-0028">Amino-acid biosynthesis</keyword>
<keyword id="KW-0100">Branched-chain amino acid biosynthesis</keyword>
<keyword id="KW-0963">Cytoplasm</keyword>
<keyword id="KW-0432">Leucine biosynthesis</keyword>
<keyword id="KW-0464">Manganese</keyword>
<keyword id="KW-0479">Metal-binding</keyword>
<keyword id="KW-0808">Transferase</keyword>
<accession>D3EBC1</accession>
<gene>
    <name evidence="1" type="primary">leuA</name>
    <name type="ordered locus">GYMC10_4749</name>
</gene>
<organism>
    <name type="scientific">Geobacillus sp. (strain Y412MC10)</name>
    <dbReference type="NCBI Taxonomy" id="481743"/>
    <lineage>
        <taxon>Bacteria</taxon>
        <taxon>Bacillati</taxon>
        <taxon>Bacillota</taxon>
        <taxon>Bacilli</taxon>
        <taxon>Bacillales</taxon>
        <taxon>Paenibacillaceae</taxon>
        <taxon>Paenibacillus</taxon>
    </lineage>
</organism>
<evidence type="ECO:0000255" key="1">
    <source>
        <dbReference type="HAMAP-Rule" id="MF_01025"/>
    </source>
</evidence>
<feature type="chain" id="PRO_0000406895" description="2-isopropylmalate synthase">
    <location>
        <begin position="1"/>
        <end position="518"/>
    </location>
</feature>
<feature type="domain" description="Pyruvate carboxyltransferase" evidence="1">
    <location>
        <begin position="5"/>
        <end position="269"/>
    </location>
</feature>
<feature type="region of interest" description="Regulatory domain" evidence="1">
    <location>
        <begin position="397"/>
        <end position="518"/>
    </location>
</feature>
<feature type="binding site" evidence="1">
    <location>
        <position position="14"/>
    </location>
    <ligand>
        <name>Mn(2+)</name>
        <dbReference type="ChEBI" id="CHEBI:29035"/>
    </ligand>
</feature>
<feature type="binding site" evidence="1">
    <location>
        <position position="204"/>
    </location>
    <ligand>
        <name>Mn(2+)</name>
        <dbReference type="ChEBI" id="CHEBI:29035"/>
    </ligand>
</feature>
<feature type="binding site" evidence="1">
    <location>
        <position position="206"/>
    </location>
    <ligand>
        <name>Mn(2+)</name>
        <dbReference type="ChEBI" id="CHEBI:29035"/>
    </ligand>
</feature>
<feature type="binding site" evidence="1">
    <location>
        <position position="240"/>
    </location>
    <ligand>
        <name>Mn(2+)</name>
        <dbReference type="ChEBI" id="CHEBI:29035"/>
    </ligand>
</feature>
<proteinExistence type="inferred from homology"/>